<comment type="catalytic activity">
    <reaction evidence="1">
        <text>tRNA(Gly) + glycine + ATP = glycyl-tRNA(Gly) + AMP + diphosphate</text>
        <dbReference type="Rhea" id="RHEA:16013"/>
        <dbReference type="Rhea" id="RHEA-COMP:9664"/>
        <dbReference type="Rhea" id="RHEA-COMP:9683"/>
        <dbReference type="ChEBI" id="CHEBI:30616"/>
        <dbReference type="ChEBI" id="CHEBI:33019"/>
        <dbReference type="ChEBI" id="CHEBI:57305"/>
        <dbReference type="ChEBI" id="CHEBI:78442"/>
        <dbReference type="ChEBI" id="CHEBI:78522"/>
        <dbReference type="ChEBI" id="CHEBI:456215"/>
        <dbReference type="EC" id="6.1.1.14"/>
    </reaction>
</comment>
<comment type="subunit">
    <text evidence="1">Tetramer of two alpha and two beta subunits.</text>
</comment>
<comment type="subcellular location">
    <subcellularLocation>
        <location evidence="1">Cytoplasm</location>
    </subcellularLocation>
</comment>
<comment type="similarity">
    <text evidence="1">Belongs to the class-II aminoacyl-tRNA synthetase family.</text>
</comment>
<name>SYGB_PSEPF</name>
<accession>Q3KKF3</accession>
<organism>
    <name type="scientific">Pseudomonas fluorescens (strain Pf0-1)</name>
    <dbReference type="NCBI Taxonomy" id="205922"/>
    <lineage>
        <taxon>Bacteria</taxon>
        <taxon>Pseudomonadati</taxon>
        <taxon>Pseudomonadota</taxon>
        <taxon>Gammaproteobacteria</taxon>
        <taxon>Pseudomonadales</taxon>
        <taxon>Pseudomonadaceae</taxon>
        <taxon>Pseudomonas</taxon>
    </lineage>
</organism>
<feature type="chain" id="PRO_1000006393" description="Glycine--tRNA ligase beta subunit">
    <location>
        <begin position="1"/>
        <end position="684"/>
    </location>
</feature>
<protein>
    <recommendedName>
        <fullName evidence="1">Glycine--tRNA ligase beta subunit</fullName>
        <ecNumber evidence="1">6.1.1.14</ecNumber>
    </recommendedName>
    <alternativeName>
        <fullName evidence="1">Glycyl-tRNA synthetase beta subunit</fullName>
        <shortName evidence="1">GlyRS</shortName>
    </alternativeName>
</protein>
<dbReference type="EC" id="6.1.1.14" evidence="1"/>
<dbReference type="EMBL" id="CP000094">
    <property type="protein sequence ID" value="ABA71753.1"/>
    <property type="molecule type" value="Genomic_DNA"/>
</dbReference>
<dbReference type="RefSeq" id="WP_011331739.1">
    <property type="nucleotide sequence ID" value="NC_007492.2"/>
</dbReference>
<dbReference type="SMR" id="Q3KKF3"/>
<dbReference type="KEGG" id="pfo:Pfl01_0009"/>
<dbReference type="eggNOG" id="COG0751">
    <property type="taxonomic scope" value="Bacteria"/>
</dbReference>
<dbReference type="HOGENOM" id="CLU_007220_2_2_6"/>
<dbReference type="Proteomes" id="UP000002704">
    <property type="component" value="Chromosome"/>
</dbReference>
<dbReference type="GO" id="GO:0005829">
    <property type="term" value="C:cytosol"/>
    <property type="evidence" value="ECO:0007669"/>
    <property type="project" value="TreeGrafter"/>
</dbReference>
<dbReference type="GO" id="GO:0004814">
    <property type="term" value="F:arginine-tRNA ligase activity"/>
    <property type="evidence" value="ECO:0007669"/>
    <property type="project" value="InterPro"/>
</dbReference>
<dbReference type="GO" id="GO:0005524">
    <property type="term" value="F:ATP binding"/>
    <property type="evidence" value="ECO:0007669"/>
    <property type="project" value="UniProtKB-UniRule"/>
</dbReference>
<dbReference type="GO" id="GO:0004820">
    <property type="term" value="F:glycine-tRNA ligase activity"/>
    <property type="evidence" value="ECO:0007669"/>
    <property type="project" value="UniProtKB-UniRule"/>
</dbReference>
<dbReference type="GO" id="GO:0006420">
    <property type="term" value="P:arginyl-tRNA aminoacylation"/>
    <property type="evidence" value="ECO:0007669"/>
    <property type="project" value="InterPro"/>
</dbReference>
<dbReference type="GO" id="GO:0006426">
    <property type="term" value="P:glycyl-tRNA aminoacylation"/>
    <property type="evidence" value="ECO:0007669"/>
    <property type="project" value="UniProtKB-UniRule"/>
</dbReference>
<dbReference type="HAMAP" id="MF_00255">
    <property type="entry name" value="Gly_tRNA_synth_beta"/>
    <property type="match status" value="1"/>
</dbReference>
<dbReference type="InterPro" id="IPR008909">
    <property type="entry name" value="DALR_anticod-bd"/>
</dbReference>
<dbReference type="InterPro" id="IPR015944">
    <property type="entry name" value="Gly-tRNA-synth_bsu"/>
</dbReference>
<dbReference type="InterPro" id="IPR006194">
    <property type="entry name" value="Gly-tRNA-synth_heterodimer"/>
</dbReference>
<dbReference type="NCBIfam" id="TIGR00211">
    <property type="entry name" value="glyS"/>
    <property type="match status" value="1"/>
</dbReference>
<dbReference type="PANTHER" id="PTHR30075:SF2">
    <property type="entry name" value="GLYCINE--TRNA LIGASE, CHLOROPLASTIC_MITOCHONDRIAL 2"/>
    <property type="match status" value="1"/>
</dbReference>
<dbReference type="PANTHER" id="PTHR30075">
    <property type="entry name" value="GLYCYL-TRNA SYNTHETASE"/>
    <property type="match status" value="1"/>
</dbReference>
<dbReference type="Pfam" id="PF05746">
    <property type="entry name" value="DALR_1"/>
    <property type="match status" value="1"/>
</dbReference>
<dbReference type="Pfam" id="PF02092">
    <property type="entry name" value="tRNA_synt_2f"/>
    <property type="match status" value="1"/>
</dbReference>
<dbReference type="PRINTS" id="PR01045">
    <property type="entry name" value="TRNASYNTHGB"/>
</dbReference>
<dbReference type="SUPFAM" id="SSF109604">
    <property type="entry name" value="HD-domain/PDEase-like"/>
    <property type="match status" value="1"/>
</dbReference>
<dbReference type="PROSITE" id="PS50861">
    <property type="entry name" value="AA_TRNA_LIGASE_II_GLYAB"/>
    <property type="match status" value="1"/>
</dbReference>
<reference key="1">
    <citation type="journal article" date="2009" name="Genome Biol.">
        <title>Genomic and genetic analyses of diversity and plant interactions of Pseudomonas fluorescens.</title>
        <authorList>
            <person name="Silby M.W."/>
            <person name="Cerdeno-Tarraga A.M."/>
            <person name="Vernikos G.S."/>
            <person name="Giddens S.R."/>
            <person name="Jackson R.W."/>
            <person name="Preston G.M."/>
            <person name="Zhang X.-X."/>
            <person name="Moon C.D."/>
            <person name="Gehrig S.M."/>
            <person name="Godfrey S.A.C."/>
            <person name="Knight C.G."/>
            <person name="Malone J.G."/>
            <person name="Robinson Z."/>
            <person name="Spiers A.J."/>
            <person name="Harris S."/>
            <person name="Challis G.L."/>
            <person name="Yaxley A.M."/>
            <person name="Harris D."/>
            <person name="Seeger K."/>
            <person name="Murphy L."/>
            <person name="Rutter S."/>
            <person name="Squares R."/>
            <person name="Quail M.A."/>
            <person name="Saunders E."/>
            <person name="Mavromatis K."/>
            <person name="Brettin T.S."/>
            <person name="Bentley S.D."/>
            <person name="Hothersall J."/>
            <person name="Stephens E."/>
            <person name="Thomas C.M."/>
            <person name="Parkhill J."/>
            <person name="Levy S.B."/>
            <person name="Rainey P.B."/>
            <person name="Thomson N.R."/>
        </authorList>
    </citation>
    <scope>NUCLEOTIDE SEQUENCE [LARGE SCALE GENOMIC DNA]</scope>
    <source>
        <strain>Pf0-1</strain>
    </source>
</reference>
<evidence type="ECO:0000255" key="1">
    <source>
        <dbReference type="HAMAP-Rule" id="MF_00255"/>
    </source>
</evidence>
<keyword id="KW-0030">Aminoacyl-tRNA synthetase</keyword>
<keyword id="KW-0067">ATP-binding</keyword>
<keyword id="KW-0963">Cytoplasm</keyword>
<keyword id="KW-0436">Ligase</keyword>
<keyword id="KW-0547">Nucleotide-binding</keyword>
<keyword id="KW-0648">Protein biosynthesis</keyword>
<proteinExistence type="inferred from homology"/>
<gene>
    <name evidence="1" type="primary">glyS</name>
    <name type="ordered locus">Pfl01_0009</name>
</gene>
<sequence length="684" mass="74616">MSAQDFLVELGTEELPPKALNTLAEAFLAGIDKGLQAAGLNYESKTVYAAPRRLAVLITALATQQPDRSINLDGPPRQAAFDADGNPTQAALGFAKKCGVELSEIDQSGPKLRYSQNIAGKPTASLLPTIVEDSLNDLPIPKRMRWGARKEEFVRPTQWLVMLLGDQIIDCTILAQKAGRESRGHRFHHPQSVRIGSPSSYLADLRAAYVLADANERREIISKRTEELATRQEGTAIVPPALLDEVTALVEWPVPLVCSFEERFLDVPQEALITTMQDNQKYFCLLDADGKLLPRFITVANIESKDPQQIIAGNEKVVRPRLTDAEFFFKQDKKQKLEAFNDRLQNVVFQEKLGSVYDKAERVSKLAAYIAARIGGNASWAARAGLLSKCDLATEMVGEFPEMQGVAGYYYALNDGEPEDVALALNEQYMPRGAGAELPATLTGAAVAIADKLDTLVGIFGIGMLPTGSKDPYALRRAALGVLRILIEKQLDLDLNDAVAFAVNAFGAKVKAAGLNDAVLEFIFDRLRARYEDEGVGVATYLSVRALKPGSALDFDQRVQAVQAFRKLPEAAALAAVNKRVSNLLSKVEGSVPTEVQAKYFDNANEFSLYSAIQQADQAVQPMAAARQYNESLARLAALREPVDAFFDAVMVNAEDANVRANRYALLARLRGLFLGVADISLLG</sequence>